<evidence type="ECO:0000250" key="1"/>
<evidence type="ECO:0000255" key="2">
    <source>
        <dbReference type="HAMAP-Rule" id="MF_00480"/>
    </source>
</evidence>
<evidence type="ECO:0000305" key="3"/>
<accession>Q06GK0</accession>
<proteinExistence type="inferred from homology"/>
<protein>
    <recommendedName>
        <fullName evidence="2">Small ribosomal subunit protein uS7cz/uS7cy</fullName>
    </recommendedName>
    <alternativeName>
        <fullName>30S ribosomal protein S7, chloroplastic</fullName>
    </alternativeName>
</protein>
<comment type="function">
    <text evidence="1">One of the primary rRNA binding proteins, it binds directly to 16S rRNA where it nucleates assembly of the head domain of the 30S subunit.</text>
</comment>
<comment type="subunit">
    <text>Part of the 30S ribosomal subunit.</text>
</comment>
<comment type="subcellular location">
    <subcellularLocation>
        <location>Plastid</location>
        <location>Chloroplast</location>
    </subcellularLocation>
</comment>
<comment type="similarity">
    <text evidence="3">Belongs to the universal ribosomal protein uS7 family.</text>
</comment>
<reference key="1">
    <citation type="journal article" date="2006" name="BMC Evol. Biol.">
        <title>Complete plastid genome sequences of Drimys, Liriodendron, and Piper: implications for the phylogenetic relationships of magnoliids.</title>
        <authorList>
            <person name="Cai Z."/>
            <person name="Penaflor C."/>
            <person name="Kuehl J.V."/>
            <person name="Leebens-Mack J."/>
            <person name="Carlson J.E."/>
            <person name="dePamphilis C.W."/>
            <person name="Boore J.L."/>
            <person name="Jansen R.K."/>
        </authorList>
    </citation>
    <scope>NUCLEOTIDE SEQUENCE [LARGE SCALE GENOMIC DNA]</scope>
</reference>
<feature type="chain" id="PRO_0000277052" description="Small ribosomal subunit protein uS7cz/uS7cy">
    <location>
        <begin position="1"/>
        <end position="155"/>
    </location>
</feature>
<keyword id="KW-0150">Chloroplast</keyword>
<keyword id="KW-0934">Plastid</keyword>
<keyword id="KW-0687">Ribonucleoprotein</keyword>
<keyword id="KW-0689">Ribosomal protein</keyword>
<keyword id="KW-0694">RNA-binding</keyword>
<keyword id="KW-0699">rRNA-binding</keyword>
<sequence>MSRRGTTEEKTAKSDPIYRNRLVNMLVNRILKHGKKSLAYQIIYRAVKKIQQKTETNPLSVLRQAIHGVTPDIAVKARRVGGSTHQVPIEIGSTQGKALAIRWLLWASRKRPGRNMAFKLSSELVDAAKGSGDAIRKKEETHRMAEANRAFAHFR</sequence>
<name>RR7_PIPCE</name>
<dbReference type="EMBL" id="DQ887677">
    <property type="protein sequence ID" value="ABI14518.1"/>
    <property type="molecule type" value="Genomic_DNA"/>
</dbReference>
<dbReference type="EMBL" id="DQ887677">
    <property type="protein sequence ID" value="ABI14531.1"/>
    <property type="molecule type" value="Genomic_DNA"/>
</dbReference>
<dbReference type="SMR" id="Q06GK0"/>
<dbReference type="GO" id="GO:0009507">
    <property type="term" value="C:chloroplast"/>
    <property type="evidence" value="ECO:0007669"/>
    <property type="project" value="UniProtKB-SubCell"/>
</dbReference>
<dbReference type="GO" id="GO:0015935">
    <property type="term" value="C:small ribosomal subunit"/>
    <property type="evidence" value="ECO:0007669"/>
    <property type="project" value="InterPro"/>
</dbReference>
<dbReference type="GO" id="GO:0019843">
    <property type="term" value="F:rRNA binding"/>
    <property type="evidence" value="ECO:0007669"/>
    <property type="project" value="UniProtKB-UniRule"/>
</dbReference>
<dbReference type="GO" id="GO:0003735">
    <property type="term" value="F:structural constituent of ribosome"/>
    <property type="evidence" value="ECO:0007669"/>
    <property type="project" value="InterPro"/>
</dbReference>
<dbReference type="GO" id="GO:0006412">
    <property type="term" value="P:translation"/>
    <property type="evidence" value="ECO:0007669"/>
    <property type="project" value="UniProtKB-UniRule"/>
</dbReference>
<dbReference type="CDD" id="cd14871">
    <property type="entry name" value="uS7_Chloroplast"/>
    <property type="match status" value="1"/>
</dbReference>
<dbReference type="FunFam" id="1.10.455.10:FF:000001">
    <property type="entry name" value="30S ribosomal protein S7"/>
    <property type="match status" value="1"/>
</dbReference>
<dbReference type="Gene3D" id="1.10.455.10">
    <property type="entry name" value="Ribosomal protein S7 domain"/>
    <property type="match status" value="1"/>
</dbReference>
<dbReference type="HAMAP" id="MF_00480_B">
    <property type="entry name" value="Ribosomal_uS7_B"/>
    <property type="match status" value="1"/>
</dbReference>
<dbReference type="InterPro" id="IPR000235">
    <property type="entry name" value="Ribosomal_uS7"/>
</dbReference>
<dbReference type="InterPro" id="IPR005717">
    <property type="entry name" value="Ribosomal_uS7_bac/org-type"/>
</dbReference>
<dbReference type="InterPro" id="IPR020606">
    <property type="entry name" value="Ribosomal_uS7_CS"/>
</dbReference>
<dbReference type="InterPro" id="IPR023798">
    <property type="entry name" value="Ribosomal_uS7_dom"/>
</dbReference>
<dbReference type="InterPro" id="IPR036823">
    <property type="entry name" value="Ribosomal_uS7_dom_sf"/>
</dbReference>
<dbReference type="NCBIfam" id="TIGR01029">
    <property type="entry name" value="rpsG_bact"/>
    <property type="match status" value="1"/>
</dbReference>
<dbReference type="PANTHER" id="PTHR11205">
    <property type="entry name" value="RIBOSOMAL PROTEIN S7"/>
    <property type="match status" value="1"/>
</dbReference>
<dbReference type="Pfam" id="PF00177">
    <property type="entry name" value="Ribosomal_S7"/>
    <property type="match status" value="1"/>
</dbReference>
<dbReference type="PIRSF" id="PIRSF002122">
    <property type="entry name" value="RPS7p_RPS7a_RPS5e_RPS7o"/>
    <property type="match status" value="1"/>
</dbReference>
<dbReference type="SUPFAM" id="SSF47973">
    <property type="entry name" value="Ribosomal protein S7"/>
    <property type="match status" value="1"/>
</dbReference>
<dbReference type="PROSITE" id="PS00052">
    <property type="entry name" value="RIBOSOMAL_S7"/>
    <property type="match status" value="1"/>
</dbReference>
<organism>
    <name type="scientific">Piper cenocladum</name>
    <name type="common">Ant piper</name>
    <dbReference type="NCBI Taxonomy" id="398741"/>
    <lineage>
        <taxon>Eukaryota</taxon>
        <taxon>Viridiplantae</taxon>
        <taxon>Streptophyta</taxon>
        <taxon>Embryophyta</taxon>
        <taxon>Tracheophyta</taxon>
        <taxon>Spermatophyta</taxon>
        <taxon>Magnoliopsida</taxon>
        <taxon>Magnoliidae</taxon>
        <taxon>Piperales</taxon>
        <taxon>Piperaceae</taxon>
        <taxon>Piper</taxon>
    </lineage>
</organism>
<gene>
    <name type="primary">rps7-A</name>
</gene>
<gene>
    <name type="primary">rps7-B</name>
</gene>
<geneLocation type="chloroplast"/>